<name>Y886_HAEIN</name>
<feature type="chain" id="PRO_0000077969" description="Uncharacterized protein HI_0886">
    <location>
        <begin position="1"/>
        <end position="134"/>
    </location>
</feature>
<feature type="transmembrane region" description="Helical" evidence="1">
    <location>
        <begin position="9"/>
        <end position="29"/>
    </location>
</feature>
<feature type="transmembrane region" description="Helical" evidence="1">
    <location>
        <begin position="49"/>
        <end position="69"/>
    </location>
</feature>
<feature type="transmembrane region" description="Helical" evidence="1">
    <location>
        <begin position="107"/>
        <end position="127"/>
    </location>
</feature>
<comment type="subcellular location">
    <subcellularLocation>
        <location evidence="2">Cell membrane</location>
        <topology evidence="2">Multi-pass membrane protein</topology>
    </subcellularLocation>
</comment>
<comment type="similarity">
    <text evidence="2">Belongs to the DoxX family.</text>
</comment>
<protein>
    <recommendedName>
        <fullName>Uncharacterized protein HI_0886</fullName>
    </recommendedName>
</protein>
<gene>
    <name type="ordered locus">HI_0886</name>
</gene>
<accession>P44069</accession>
<sequence>MNNLEKYRPYFLAFLRIVVAYMFILHGTAKFLEFPISMTGGNGAVGDPMLLVAGVIEIVGSILLILGLFTRQAAFILSVEMAYAYFFLHVAGKGNLFFPIANGGELALLYSLLFLYFVFSGAGACALDNKFFKK</sequence>
<organism>
    <name type="scientific">Haemophilus influenzae (strain ATCC 51907 / DSM 11121 / KW20 / Rd)</name>
    <dbReference type="NCBI Taxonomy" id="71421"/>
    <lineage>
        <taxon>Bacteria</taxon>
        <taxon>Pseudomonadati</taxon>
        <taxon>Pseudomonadota</taxon>
        <taxon>Gammaproteobacteria</taxon>
        <taxon>Pasteurellales</taxon>
        <taxon>Pasteurellaceae</taxon>
        <taxon>Haemophilus</taxon>
    </lineage>
</organism>
<dbReference type="EMBL" id="L42023">
    <property type="protein sequence ID" value="AAC22547.1"/>
    <property type="molecule type" value="Genomic_DNA"/>
</dbReference>
<dbReference type="PIR" id="F64015">
    <property type="entry name" value="F64015"/>
</dbReference>
<dbReference type="RefSeq" id="NP_439047.1">
    <property type="nucleotide sequence ID" value="NC_000907.1"/>
</dbReference>
<dbReference type="STRING" id="71421.HI_0886"/>
<dbReference type="EnsemblBacteria" id="AAC22547">
    <property type="protein sequence ID" value="AAC22547"/>
    <property type="gene ID" value="HI_0886"/>
</dbReference>
<dbReference type="KEGG" id="hin:HI_0886"/>
<dbReference type="PATRIC" id="fig|71421.8.peg.928"/>
<dbReference type="eggNOG" id="COG2259">
    <property type="taxonomic scope" value="Bacteria"/>
</dbReference>
<dbReference type="HOGENOM" id="CLU_058421_2_1_6"/>
<dbReference type="OrthoDB" id="346004at2"/>
<dbReference type="PhylomeDB" id="P44069"/>
<dbReference type="BioCyc" id="HINF71421:G1GJ1-926-MONOMER"/>
<dbReference type="Proteomes" id="UP000000579">
    <property type="component" value="Chromosome"/>
</dbReference>
<dbReference type="GO" id="GO:0005886">
    <property type="term" value="C:plasma membrane"/>
    <property type="evidence" value="ECO:0000318"/>
    <property type="project" value="GO_Central"/>
</dbReference>
<dbReference type="InterPro" id="IPR032808">
    <property type="entry name" value="DoxX"/>
</dbReference>
<dbReference type="InterPro" id="IPR051907">
    <property type="entry name" value="DoxX-like_oxidoreductase"/>
</dbReference>
<dbReference type="PANTHER" id="PTHR33452:SF4">
    <property type="entry name" value="BLL4328 PROTEIN"/>
    <property type="match status" value="1"/>
</dbReference>
<dbReference type="PANTHER" id="PTHR33452">
    <property type="entry name" value="OXIDOREDUCTASE CATD-RELATED"/>
    <property type="match status" value="1"/>
</dbReference>
<dbReference type="Pfam" id="PF07681">
    <property type="entry name" value="DoxX"/>
    <property type="match status" value="1"/>
</dbReference>
<proteinExistence type="inferred from homology"/>
<evidence type="ECO:0000255" key="1"/>
<evidence type="ECO:0000305" key="2"/>
<keyword id="KW-1003">Cell membrane</keyword>
<keyword id="KW-0472">Membrane</keyword>
<keyword id="KW-1185">Reference proteome</keyword>
<keyword id="KW-0812">Transmembrane</keyword>
<keyword id="KW-1133">Transmembrane helix</keyword>
<reference key="1">
    <citation type="journal article" date="1995" name="Science">
        <title>Whole-genome random sequencing and assembly of Haemophilus influenzae Rd.</title>
        <authorList>
            <person name="Fleischmann R.D."/>
            <person name="Adams M.D."/>
            <person name="White O."/>
            <person name="Clayton R.A."/>
            <person name="Kirkness E.F."/>
            <person name="Kerlavage A.R."/>
            <person name="Bult C.J."/>
            <person name="Tomb J.-F."/>
            <person name="Dougherty B.A."/>
            <person name="Merrick J.M."/>
            <person name="McKenney K."/>
            <person name="Sutton G.G."/>
            <person name="FitzHugh W."/>
            <person name="Fields C.A."/>
            <person name="Gocayne J.D."/>
            <person name="Scott J.D."/>
            <person name="Shirley R."/>
            <person name="Liu L.-I."/>
            <person name="Glodek A."/>
            <person name="Kelley J.M."/>
            <person name="Weidman J.F."/>
            <person name="Phillips C.A."/>
            <person name="Spriggs T."/>
            <person name="Hedblom E."/>
            <person name="Cotton M.D."/>
            <person name="Utterback T.R."/>
            <person name="Hanna M.C."/>
            <person name="Nguyen D.T."/>
            <person name="Saudek D.M."/>
            <person name="Brandon R.C."/>
            <person name="Fine L.D."/>
            <person name="Fritchman J.L."/>
            <person name="Fuhrmann J.L."/>
            <person name="Geoghagen N.S.M."/>
            <person name="Gnehm C.L."/>
            <person name="McDonald L.A."/>
            <person name="Small K.V."/>
            <person name="Fraser C.M."/>
            <person name="Smith H.O."/>
            <person name="Venter J.C."/>
        </authorList>
    </citation>
    <scope>NUCLEOTIDE SEQUENCE [LARGE SCALE GENOMIC DNA]</scope>
    <source>
        <strain>ATCC 51907 / DSM 11121 / KW20 / Rd</strain>
    </source>
</reference>